<protein>
    <recommendedName>
        <fullName evidence="1">6-carboxyhexanoate--CoA ligase</fullName>
        <ecNumber evidence="1">6.2.1.14</ecNumber>
    </recommendedName>
    <alternativeName>
        <fullName evidence="1">Pimeloyl-CoA synthase</fullName>
    </alternativeName>
</protein>
<comment type="function">
    <text evidence="1">Catalyzes the transformation of pimelate into pimeloyl-CoA with concomitant hydrolysis of ATP to AMP.</text>
</comment>
<comment type="catalytic activity">
    <reaction evidence="1">
        <text>heptanedioate + ATP + CoA = 6-carboxyhexanoyl-CoA + AMP + diphosphate</text>
        <dbReference type="Rhea" id="RHEA:14781"/>
        <dbReference type="ChEBI" id="CHEBI:30616"/>
        <dbReference type="ChEBI" id="CHEBI:33019"/>
        <dbReference type="ChEBI" id="CHEBI:36165"/>
        <dbReference type="ChEBI" id="CHEBI:57287"/>
        <dbReference type="ChEBI" id="CHEBI:57360"/>
        <dbReference type="ChEBI" id="CHEBI:456215"/>
        <dbReference type="EC" id="6.2.1.14"/>
    </reaction>
</comment>
<comment type="cofactor">
    <cofactor evidence="1">
        <name>Mg(2+)</name>
        <dbReference type="ChEBI" id="CHEBI:18420"/>
    </cofactor>
</comment>
<comment type="pathway">
    <text evidence="1">Metabolic intermediate metabolism; pimeloyl-CoA biosynthesis; pimeloyl-CoA from pimelate: step 1/1.</text>
</comment>
<comment type="subunit">
    <text evidence="1">Homodimer.</text>
</comment>
<comment type="similarity">
    <text evidence="1">Belongs to the BioW family.</text>
</comment>
<organism>
    <name type="scientific">Thermocrinis albus (strain DSM 14484 / JCM 11386 / HI 11/12)</name>
    <dbReference type="NCBI Taxonomy" id="638303"/>
    <lineage>
        <taxon>Bacteria</taxon>
        <taxon>Pseudomonadati</taxon>
        <taxon>Aquificota</taxon>
        <taxon>Aquificia</taxon>
        <taxon>Aquificales</taxon>
        <taxon>Aquificaceae</taxon>
        <taxon>Thermocrinis</taxon>
    </lineage>
</organism>
<gene>
    <name evidence="1" type="primary">bioW</name>
    <name type="ordered locus">Thal_1538</name>
</gene>
<name>BIOW_THEAH</name>
<reference key="1">
    <citation type="journal article" date="2010" name="Stand. Genomic Sci.">
        <title>Complete genome sequence of Thermocrinis albus type strain (HI 11/12T).</title>
        <authorList>
            <person name="Wirth R."/>
            <person name="Sikorski J."/>
            <person name="Brambilla E."/>
            <person name="Misra M."/>
            <person name="Lapidus A."/>
            <person name="Copeland A."/>
            <person name="Nolan M."/>
            <person name="Lucas S."/>
            <person name="Chen F."/>
            <person name="Tice H."/>
            <person name="Cheng J.F."/>
            <person name="Han C."/>
            <person name="Detter J.C."/>
            <person name="Tapia R."/>
            <person name="Bruce D."/>
            <person name="Goodwin L."/>
            <person name="Pitluck S."/>
            <person name="Pati A."/>
            <person name="Anderson I."/>
            <person name="Ivanova N."/>
            <person name="Mavromatis K."/>
            <person name="Mikhailova N."/>
            <person name="Chen A."/>
            <person name="Palaniappan K."/>
            <person name="Bilek Y."/>
            <person name="Hader T."/>
            <person name="Land M."/>
            <person name="Hauser L."/>
            <person name="Chang Y.J."/>
            <person name="Jeffries C.D."/>
            <person name="Tindall B.J."/>
            <person name="Rohde M."/>
            <person name="Goker M."/>
            <person name="Bristow J."/>
            <person name="Eisen J.A."/>
            <person name="Markowitz V."/>
            <person name="Hugenholtz P."/>
            <person name="Kyrpides N.C."/>
            <person name="Klenk H.P."/>
        </authorList>
    </citation>
    <scope>NUCLEOTIDE SEQUENCE [LARGE SCALE GENOMIC DNA]</scope>
    <source>
        <strain>DSM 14484 / JCM 11386 / HI 11/12</strain>
    </source>
</reference>
<sequence>MRSIRMRAEFQGEHVSGAERIVPYHEVEKTVLELLKRPRVYDKVVITVERLKDVEIVPKALPILSYDFKSVEEARAFAVSKLVEAGVPKPVAELAIKLLHEGPNPKGGNMRGAVLMDVETGERLEPDRERGIRTTRMDWKDRKYIKEVLKKRGIKREYLERLIDALAVATKNVYCGVLAELCWSDDPEYTTGYVAGPHIGYVRIKPMKEEGVPIGGRVYFIRKENLEKIIQCLQEKPILINNL</sequence>
<dbReference type="EC" id="6.2.1.14" evidence="1"/>
<dbReference type="EMBL" id="CP001931">
    <property type="protein sequence ID" value="ADC90167.1"/>
    <property type="molecule type" value="Genomic_DNA"/>
</dbReference>
<dbReference type="RefSeq" id="WP_012992573.1">
    <property type="nucleotide sequence ID" value="NC_013894.1"/>
</dbReference>
<dbReference type="SMR" id="D3SN37"/>
<dbReference type="STRING" id="638303.Thal_1538"/>
<dbReference type="KEGG" id="tal:Thal_1538"/>
<dbReference type="eggNOG" id="COG1424">
    <property type="taxonomic scope" value="Bacteria"/>
</dbReference>
<dbReference type="HOGENOM" id="CLU_076858_0_0_0"/>
<dbReference type="OrthoDB" id="9792985at2"/>
<dbReference type="UniPathway" id="UPA00999">
    <property type="reaction ID" value="UER00351"/>
</dbReference>
<dbReference type="Proteomes" id="UP000002043">
    <property type="component" value="Chromosome"/>
</dbReference>
<dbReference type="GO" id="GO:0042410">
    <property type="term" value="F:6-carboxyhexanoate-CoA ligase activity"/>
    <property type="evidence" value="ECO:0007669"/>
    <property type="project" value="UniProtKB-UniRule"/>
</dbReference>
<dbReference type="GO" id="GO:0005524">
    <property type="term" value="F:ATP binding"/>
    <property type="evidence" value="ECO:0007669"/>
    <property type="project" value="UniProtKB-KW"/>
</dbReference>
<dbReference type="GO" id="GO:0000287">
    <property type="term" value="F:magnesium ion binding"/>
    <property type="evidence" value="ECO:0007669"/>
    <property type="project" value="UniProtKB-UniRule"/>
</dbReference>
<dbReference type="GO" id="GO:0009102">
    <property type="term" value="P:biotin biosynthetic process"/>
    <property type="evidence" value="ECO:0007669"/>
    <property type="project" value="UniProtKB-UniRule"/>
</dbReference>
<dbReference type="HAMAP" id="MF_00668">
    <property type="entry name" value="BioW"/>
    <property type="match status" value="1"/>
</dbReference>
<dbReference type="InterPro" id="IPR005499">
    <property type="entry name" value="BioW"/>
</dbReference>
<dbReference type="NCBIfam" id="TIGR01204">
    <property type="entry name" value="bioW"/>
    <property type="match status" value="1"/>
</dbReference>
<dbReference type="NCBIfam" id="NF002360">
    <property type="entry name" value="PRK01322.1"/>
    <property type="match status" value="1"/>
</dbReference>
<dbReference type="Pfam" id="PF03744">
    <property type="entry name" value="BioW"/>
    <property type="match status" value="1"/>
</dbReference>
<accession>D3SN37</accession>
<keyword id="KW-0067">ATP-binding</keyword>
<keyword id="KW-0093">Biotin biosynthesis</keyword>
<keyword id="KW-0436">Ligase</keyword>
<keyword id="KW-0460">Magnesium</keyword>
<keyword id="KW-0547">Nucleotide-binding</keyword>
<keyword id="KW-1185">Reference proteome</keyword>
<feature type="chain" id="PRO_0000412091" description="6-carboxyhexanoate--CoA ligase">
    <location>
        <begin position="1"/>
        <end position="243"/>
    </location>
</feature>
<proteinExistence type="inferred from homology"/>
<evidence type="ECO:0000255" key="1">
    <source>
        <dbReference type="HAMAP-Rule" id="MF_00668"/>
    </source>
</evidence>